<comment type="function">
    <text evidence="1">Catalyzes the synthesis of GMP from XMP.</text>
</comment>
<comment type="catalytic activity">
    <reaction evidence="1">
        <text>XMP + L-glutamine + ATP + H2O = GMP + L-glutamate + AMP + diphosphate + 2 H(+)</text>
        <dbReference type="Rhea" id="RHEA:11680"/>
        <dbReference type="ChEBI" id="CHEBI:15377"/>
        <dbReference type="ChEBI" id="CHEBI:15378"/>
        <dbReference type="ChEBI" id="CHEBI:29985"/>
        <dbReference type="ChEBI" id="CHEBI:30616"/>
        <dbReference type="ChEBI" id="CHEBI:33019"/>
        <dbReference type="ChEBI" id="CHEBI:57464"/>
        <dbReference type="ChEBI" id="CHEBI:58115"/>
        <dbReference type="ChEBI" id="CHEBI:58359"/>
        <dbReference type="ChEBI" id="CHEBI:456215"/>
        <dbReference type="EC" id="6.3.5.2"/>
    </reaction>
</comment>
<comment type="pathway">
    <text evidence="1">Purine metabolism; GMP biosynthesis; GMP from XMP (L-Gln route): step 1/1.</text>
</comment>
<comment type="subunit">
    <text evidence="1">Homodimer.</text>
</comment>
<reference key="1">
    <citation type="journal article" date="2005" name="Proc. Natl. Acad. Sci. U.S.A.">
        <title>The complete genome sequence of Mycobacterium avium subspecies paratuberculosis.</title>
        <authorList>
            <person name="Li L."/>
            <person name="Bannantine J.P."/>
            <person name="Zhang Q."/>
            <person name="Amonsin A."/>
            <person name="May B.J."/>
            <person name="Alt D."/>
            <person name="Banerji N."/>
            <person name="Kanjilal S."/>
            <person name="Kapur V."/>
        </authorList>
    </citation>
    <scope>NUCLEOTIDE SEQUENCE [LARGE SCALE GENOMIC DNA]</scope>
    <source>
        <strain>ATCC BAA-968 / K-10</strain>
    </source>
</reference>
<organism>
    <name type="scientific">Mycolicibacterium paratuberculosis (strain ATCC BAA-968 / K-10)</name>
    <name type="common">Mycobacterium paratuberculosis</name>
    <dbReference type="NCBI Taxonomy" id="262316"/>
    <lineage>
        <taxon>Bacteria</taxon>
        <taxon>Bacillati</taxon>
        <taxon>Actinomycetota</taxon>
        <taxon>Actinomycetes</taxon>
        <taxon>Mycobacteriales</taxon>
        <taxon>Mycobacteriaceae</taxon>
        <taxon>Mycobacterium</taxon>
        <taxon>Mycobacterium avium complex (MAC)</taxon>
    </lineage>
</organism>
<accession>Q73U79</accession>
<gene>
    <name evidence="1" type="primary">guaA</name>
    <name type="ordered locus">MAP_3489c</name>
</gene>
<evidence type="ECO:0000255" key="1">
    <source>
        <dbReference type="HAMAP-Rule" id="MF_00344"/>
    </source>
</evidence>
<name>GUAA_MYCPA</name>
<protein>
    <recommendedName>
        <fullName evidence="1">GMP synthase [glutamine-hydrolyzing]</fullName>
        <ecNumber evidence="1">6.3.5.2</ecNumber>
    </recommendedName>
    <alternativeName>
        <fullName evidence="1">GMP synthetase</fullName>
    </alternativeName>
    <alternativeName>
        <fullName evidence="1">Glutamine amidotransferase</fullName>
    </alternativeName>
</protein>
<dbReference type="EC" id="6.3.5.2" evidence="1"/>
<dbReference type="EMBL" id="AE016958">
    <property type="protein sequence ID" value="AAS06039.1"/>
    <property type="molecule type" value="Genomic_DNA"/>
</dbReference>
<dbReference type="RefSeq" id="WP_003879026.1">
    <property type="nucleotide sequence ID" value="NZ_CP106873.1"/>
</dbReference>
<dbReference type="SMR" id="Q73U79"/>
<dbReference type="STRING" id="262316.MAP_3489c"/>
<dbReference type="MEROPS" id="C26.A07"/>
<dbReference type="KEGG" id="mpa:MAP_3489c"/>
<dbReference type="eggNOG" id="COG0518">
    <property type="taxonomic scope" value="Bacteria"/>
</dbReference>
<dbReference type="eggNOG" id="COG0519">
    <property type="taxonomic scope" value="Bacteria"/>
</dbReference>
<dbReference type="HOGENOM" id="CLU_014340_0_5_11"/>
<dbReference type="UniPathway" id="UPA00189">
    <property type="reaction ID" value="UER00296"/>
</dbReference>
<dbReference type="Proteomes" id="UP000000580">
    <property type="component" value="Chromosome"/>
</dbReference>
<dbReference type="GO" id="GO:0005829">
    <property type="term" value="C:cytosol"/>
    <property type="evidence" value="ECO:0007669"/>
    <property type="project" value="TreeGrafter"/>
</dbReference>
<dbReference type="GO" id="GO:0005524">
    <property type="term" value="F:ATP binding"/>
    <property type="evidence" value="ECO:0007669"/>
    <property type="project" value="UniProtKB-UniRule"/>
</dbReference>
<dbReference type="GO" id="GO:0003921">
    <property type="term" value="F:GMP synthase activity"/>
    <property type="evidence" value="ECO:0007669"/>
    <property type="project" value="InterPro"/>
</dbReference>
<dbReference type="CDD" id="cd01742">
    <property type="entry name" value="GATase1_GMP_Synthase"/>
    <property type="match status" value="1"/>
</dbReference>
<dbReference type="CDD" id="cd01997">
    <property type="entry name" value="GMP_synthase_C"/>
    <property type="match status" value="1"/>
</dbReference>
<dbReference type="FunFam" id="3.30.300.10:FF:000002">
    <property type="entry name" value="GMP synthase [glutamine-hydrolyzing]"/>
    <property type="match status" value="1"/>
</dbReference>
<dbReference type="FunFam" id="3.40.50.620:FF:000001">
    <property type="entry name" value="GMP synthase [glutamine-hydrolyzing]"/>
    <property type="match status" value="1"/>
</dbReference>
<dbReference type="FunFam" id="3.40.50.880:FF:000001">
    <property type="entry name" value="GMP synthase [glutamine-hydrolyzing]"/>
    <property type="match status" value="1"/>
</dbReference>
<dbReference type="Gene3D" id="3.30.300.10">
    <property type="match status" value="1"/>
</dbReference>
<dbReference type="Gene3D" id="3.40.50.880">
    <property type="match status" value="1"/>
</dbReference>
<dbReference type="Gene3D" id="3.40.50.620">
    <property type="entry name" value="HUPs"/>
    <property type="match status" value="1"/>
</dbReference>
<dbReference type="HAMAP" id="MF_00344">
    <property type="entry name" value="GMP_synthase"/>
    <property type="match status" value="1"/>
</dbReference>
<dbReference type="InterPro" id="IPR029062">
    <property type="entry name" value="Class_I_gatase-like"/>
</dbReference>
<dbReference type="InterPro" id="IPR017926">
    <property type="entry name" value="GATASE"/>
</dbReference>
<dbReference type="InterPro" id="IPR001674">
    <property type="entry name" value="GMP_synth_C"/>
</dbReference>
<dbReference type="InterPro" id="IPR004739">
    <property type="entry name" value="GMP_synth_GATase"/>
</dbReference>
<dbReference type="InterPro" id="IPR022955">
    <property type="entry name" value="GMP_synthase"/>
</dbReference>
<dbReference type="InterPro" id="IPR025777">
    <property type="entry name" value="GMPS_ATP_PPase_dom"/>
</dbReference>
<dbReference type="InterPro" id="IPR022310">
    <property type="entry name" value="NAD/GMP_synthase"/>
</dbReference>
<dbReference type="InterPro" id="IPR014729">
    <property type="entry name" value="Rossmann-like_a/b/a_fold"/>
</dbReference>
<dbReference type="NCBIfam" id="TIGR00884">
    <property type="entry name" value="guaA_Cterm"/>
    <property type="match status" value="1"/>
</dbReference>
<dbReference type="NCBIfam" id="TIGR00888">
    <property type="entry name" value="guaA_Nterm"/>
    <property type="match status" value="1"/>
</dbReference>
<dbReference type="NCBIfam" id="NF000848">
    <property type="entry name" value="PRK00074.1"/>
    <property type="match status" value="1"/>
</dbReference>
<dbReference type="PANTHER" id="PTHR11922:SF2">
    <property type="entry name" value="GMP SYNTHASE [GLUTAMINE-HYDROLYZING]"/>
    <property type="match status" value="1"/>
</dbReference>
<dbReference type="PANTHER" id="PTHR11922">
    <property type="entry name" value="GMP SYNTHASE-RELATED"/>
    <property type="match status" value="1"/>
</dbReference>
<dbReference type="Pfam" id="PF00117">
    <property type="entry name" value="GATase"/>
    <property type="match status" value="1"/>
</dbReference>
<dbReference type="Pfam" id="PF00958">
    <property type="entry name" value="GMP_synt_C"/>
    <property type="match status" value="1"/>
</dbReference>
<dbReference type="Pfam" id="PF02540">
    <property type="entry name" value="NAD_synthase"/>
    <property type="match status" value="1"/>
</dbReference>
<dbReference type="PRINTS" id="PR00097">
    <property type="entry name" value="ANTSNTHASEII"/>
</dbReference>
<dbReference type="PRINTS" id="PR00099">
    <property type="entry name" value="CPSGATASE"/>
</dbReference>
<dbReference type="PRINTS" id="PR00096">
    <property type="entry name" value="GATASE"/>
</dbReference>
<dbReference type="SUPFAM" id="SSF52402">
    <property type="entry name" value="Adenine nucleotide alpha hydrolases-like"/>
    <property type="match status" value="1"/>
</dbReference>
<dbReference type="SUPFAM" id="SSF52317">
    <property type="entry name" value="Class I glutamine amidotransferase-like"/>
    <property type="match status" value="1"/>
</dbReference>
<dbReference type="SUPFAM" id="SSF54810">
    <property type="entry name" value="GMP synthetase C-terminal dimerisation domain"/>
    <property type="match status" value="1"/>
</dbReference>
<dbReference type="PROSITE" id="PS51273">
    <property type="entry name" value="GATASE_TYPE_1"/>
    <property type="match status" value="1"/>
</dbReference>
<dbReference type="PROSITE" id="PS51553">
    <property type="entry name" value="GMPS_ATP_PPASE"/>
    <property type="match status" value="1"/>
</dbReference>
<feature type="chain" id="PRO_0000140147" description="GMP synthase [glutamine-hydrolyzing]">
    <location>
        <begin position="1"/>
        <end position="525"/>
    </location>
</feature>
<feature type="domain" description="Glutamine amidotransferase type-1" evidence="1">
    <location>
        <begin position="16"/>
        <end position="205"/>
    </location>
</feature>
<feature type="domain" description="GMPS ATP-PPase" evidence="1">
    <location>
        <begin position="206"/>
        <end position="399"/>
    </location>
</feature>
<feature type="active site" description="Nucleophile" evidence="1">
    <location>
        <position position="93"/>
    </location>
</feature>
<feature type="active site" evidence="1">
    <location>
        <position position="179"/>
    </location>
</feature>
<feature type="active site" evidence="1">
    <location>
        <position position="181"/>
    </location>
</feature>
<feature type="binding site" evidence="1">
    <location>
        <begin position="233"/>
        <end position="239"/>
    </location>
    <ligand>
        <name>ATP</name>
        <dbReference type="ChEBI" id="CHEBI:30616"/>
    </ligand>
</feature>
<proteinExistence type="inferred from homology"/>
<keyword id="KW-0067">ATP-binding</keyword>
<keyword id="KW-0315">Glutamine amidotransferase</keyword>
<keyword id="KW-0332">GMP biosynthesis</keyword>
<keyword id="KW-0436">Ligase</keyword>
<keyword id="KW-0547">Nucleotide-binding</keyword>
<keyword id="KW-0658">Purine biosynthesis</keyword>
<keyword id="KW-1185">Reference proteome</keyword>
<sequence>MAESPPTEVPEPPARPVLVVDFGAQYAQLIARRVREARVFSEVIPHTATIEEIKARQPRALVLSGGPSSVYEPGAPQLDPAVFDLGVPVFGICYGFQAMAQALGGTVAHTGTSEYGRTELKVLGGELHSGLPGVQPVWMSHGDAVTAAPDGFEVVASSPGAVVAAFENRARRLAGVQYHPEVMHTPHGQQVLSRFLHDFAGLGADWTAANIAGVLVEQVRAQIGDGHAICGLSGGVDSAVAAALVQRAIGDRLTCVFVDHGLLRAGERAQVQRDFVAATGANLVTVDAADTFLQALAGVTNPEGKRKIIGRQFIRAFEGAVRDVLGDKPVEFLVQGTLYPDVVESGGGSGTANIKSHHNVGGLPGDLKFTLVEPLRLLFKDEVRAVGRELGLPEEIVARQPFPGPGLGIRIVGEVTATRLDTLRRADSIAREELTAAGLDSLIWQCPVVLLGEVRSVGVQGDNRTYGHPIVLRPVTSEDAMTADWTRVPYEVLERISTRITNEVPEVNRVVLDITSKPPGTIEWE</sequence>